<accession>P35076</accession>
<reference key="1">
    <citation type="journal article" date="1992" name="Mol. Microbiol.">
        <title>Characterization of a Bordetella pertussis fimbrial gene cluster which is located directly downstream of the filamentous haemagglutinin gene.</title>
        <authorList>
            <person name="Willems R.J.L."/>
            <person name="van der Heide H.G.J."/>
            <person name="Mooi F.R."/>
        </authorList>
    </citation>
    <scope>NUCLEOTIDE SEQUENCE [GENOMIC DNA]</scope>
</reference>
<keyword id="KW-0281">Fimbrium</keyword>
<gene>
    <name type="primary">fimA</name>
</gene>
<proteinExistence type="inferred from homology"/>
<sequence>MQLPTISRTALKDVGSTAGGTVFDVKLTECPQALNGQQVGLFFESGGTVDYTSGNLFAYRADSQGVEQVPQTKADNVQANLDGSAIHLGRNKGAQAAQTFLVSQTAGSSTYGATLRYLACYIRSGAGSIVAGNLRSQVGFSVMYP</sequence>
<evidence type="ECO:0000305" key="1"/>
<comment type="subcellular location">
    <subcellularLocation>
        <location evidence="1">Fimbrium</location>
    </subcellularLocation>
</comment>
<comment type="similarity">
    <text evidence="1">Belongs to the fimbrial protein family.</text>
</comment>
<organism>
    <name type="scientific">Bordetella pertussis</name>
    <dbReference type="NCBI Taxonomy" id="520"/>
    <lineage>
        <taxon>Bacteria</taxon>
        <taxon>Pseudomonadati</taxon>
        <taxon>Pseudomonadota</taxon>
        <taxon>Betaproteobacteria</taxon>
        <taxon>Burkholderiales</taxon>
        <taxon>Alcaligenaceae</taxon>
        <taxon>Bordetella</taxon>
    </lineage>
</organism>
<dbReference type="EMBL" id="X64876">
    <property type="protein sequence ID" value="CAA46088.1"/>
    <property type="molecule type" value="Genomic_DNA"/>
</dbReference>
<dbReference type="PIR" id="S36244">
    <property type="entry name" value="S36244"/>
</dbReference>
<dbReference type="RefSeq" id="WP_019247159.1">
    <property type="nucleotide sequence ID" value="NZ_UIGD01000006.1"/>
</dbReference>
<dbReference type="SMR" id="P35076"/>
<dbReference type="GO" id="GO:0009289">
    <property type="term" value="C:pilus"/>
    <property type="evidence" value="ECO:0007669"/>
    <property type="project" value="UniProtKB-SubCell"/>
</dbReference>
<dbReference type="GO" id="GO:0007155">
    <property type="term" value="P:cell adhesion"/>
    <property type="evidence" value="ECO:0007669"/>
    <property type="project" value="InterPro"/>
</dbReference>
<dbReference type="Gene3D" id="2.60.40.1090">
    <property type="entry name" value="Fimbrial-type adhesion domain"/>
    <property type="match status" value="1"/>
</dbReference>
<dbReference type="InterPro" id="IPR036937">
    <property type="entry name" value="Adhesion_dom_fimbrial_sf"/>
</dbReference>
<dbReference type="InterPro" id="IPR008966">
    <property type="entry name" value="Adhesion_dom_sf"/>
</dbReference>
<dbReference type="InterPro" id="IPR039458">
    <property type="entry name" value="FimA-like"/>
</dbReference>
<dbReference type="Pfam" id="PF16970">
    <property type="entry name" value="FimA"/>
    <property type="match status" value="1"/>
</dbReference>
<dbReference type="SUPFAM" id="SSF49401">
    <property type="entry name" value="Bacterial adhesins"/>
    <property type="match status" value="1"/>
</dbReference>
<protein>
    <recommendedName>
        <fullName>Protein FimA</fullName>
    </recommendedName>
</protein>
<name>FIMA_BORPT</name>
<feature type="chain" id="PRO_0000196347" description="Protein FimA">
    <location>
        <begin position="1"/>
        <end position="145"/>
    </location>
</feature>